<feature type="chain" id="PRO_0000142491" description="Translation initiation factor 5A">
    <location>
        <begin position="1"/>
        <end position="127"/>
    </location>
</feature>
<feature type="modified residue" description="Hypusine" evidence="1">
    <location>
        <position position="36"/>
    </location>
</feature>
<organism>
    <name type="scientific">Halobacterium salinarum (strain ATCC 700922 / JCM 11081 / NRC-1)</name>
    <name type="common">Halobacterium halobium</name>
    <dbReference type="NCBI Taxonomy" id="64091"/>
    <lineage>
        <taxon>Archaea</taxon>
        <taxon>Methanobacteriati</taxon>
        <taxon>Methanobacteriota</taxon>
        <taxon>Stenosarchaea group</taxon>
        <taxon>Halobacteria</taxon>
        <taxon>Halobacteriales</taxon>
        <taxon>Halobacteriaceae</taxon>
        <taxon>Halobacterium</taxon>
        <taxon>Halobacterium salinarum NRC-34001</taxon>
    </lineage>
</organism>
<accession>Q9HP78</accession>
<dbReference type="EMBL" id="AE004437">
    <property type="protein sequence ID" value="AAG19992.1"/>
    <property type="molecule type" value="Genomic_DNA"/>
</dbReference>
<dbReference type="PIR" id="D84328">
    <property type="entry name" value="D84328"/>
</dbReference>
<dbReference type="RefSeq" id="WP_010903290.1">
    <property type="nucleotide sequence ID" value="NC_002607.1"/>
</dbReference>
<dbReference type="SMR" id="Q9HP78"/>
<dbReference type="FunCoup" id="Q9HP78">
    <property type="interactions" value="99"/>
</dbReference>
<dbReference type="STRING" id="64091.VNG_1768G"/>
<dbReference type="PaxDb" id="64091-VNG_1768G"/>
<dbReference type="KEGG" id="hal:VNG_1768G"/>
<dbReference type="PATRIC" id="fig|64091.14.peg.1347"/>
<dbReference type="HOGENOM" id="CLU_102600_3_0_2"/>
<dbReference type="InParanoid" id="Q9HP78"/>
<dbReference type="OrthoDB" id="23689at2157"/>
<dbReference type="PhylomeDB" id="Q9HP78"/>
<dbReference type="Proteomes" id="UP000000554">
    <property type="component" value="Chromosome"/>
</dbReference>
<dbReference type="GO" id="GO:0005737">
    <property type="term" value="C:cytoplasm"/>
    <property type="evidence" value="ECO:0007669"/>
    <property type="project" value="UniProtKB-SubCell"/>
</dbReference>
<dbReference type="GO" id="GO:0043022">
    <property type="term" value="F:ribosome binding"/>
    <property type="evidence" value="ECO:0007669"/>
    <property type="project" value="InterPro"/>
</dbReference>
<dbReference type="GO" id="GO:0003723">
    <property type="term" value="F:RNA binding"/>
    <property type="evidence" value="ECO:0007669"/>
    <property type="project" value="InterPro"/>
</dbReference>
<dbReference type="GO" id="GO:0003746">
    <property type="term" value="F:translation elongation factor activity"/>
    <property type="evidence" value="ECO:0000318"/>
    <property type="project" value="GO_Central"/>
</dbReference>
<dbReference type="GO" id="GO:0003743">
    <property type="term" value="F:translation initiation factor activity"/>
    <property type="evidence" value="ECO:0007669"/>
    <property type="project" value="UniProtKB-UniRule"/>
</dbReference>
<dbReference type="GO" id="GO:0045901">
    <property type="term" value="P:positive regulation of translational elongation"/>
    <property type="evidence" value="ECO:0007669"/>
    <property type="project" value="InterPro"/>
</dbReference>
<dbReference type="GO" id="GO:0045905">
    <property type="term" value="P:positive regulation of translational termination"/>
    <property type="evidence" value="ECO:0007669"/>
    <property type="project" value="InterPro"/>
</dbReference>
<dbReference type="GO" id="GO:0006414">
    <property type="term" value="P:translational elongation"/>
    <property type="evidence" value="ECO:0000318"/>
    <property type="project" value="GO_Central"/>
</dbReference>
<dbReference type="CDD" id="cd04467">
    <property type="entry name" value="S1_aIF5A"/>
    <property type="match status" value="1"/>
</dbReference>
<dbReference type="FunFam" id="2.30.30.30:FF:000038">
    <property type="entry name" value="Translation initiation factor 5A"/>
    <property type="match status" value="1"/>
</dbReference>
<dbReference type="Gene3D" id="2.30.30.30">
    <property type="match status" value="1"/>
</dbReference>
<dbReference type="Gene3D" id="2.40.50.140">
    <property type="entry name" value="Nucleic acid-binding proteins"/>
    <property type="match status" value="1"/>
</dbReference>
<dbReference type="HAMAP" id="MF_00085">
    <property type="entry name" value="eIF_5A"/>
    <property type="match status" value="1"/>
</dbReference>
<dbReference type="InterPro" id="IPR001884">
    <property type="entry name" value="IF5A-like"/>
</dbReference>
<dbReference type="InterPro" id="IPR048670">
    <property type="entry name" value="IF5A-like_N"/>
</dbReference>
<dbReference type="InterPro" id="IPR012340">
    <property type="entry name" value="NA-bd_OB-fold"/>
</dbReference>
<dbReference type="InterPro" id="IPR014722">
    <property type="entry name" value="Rib_uL2_dom2"/>
</dbReference>
<dbReference type="InterPro" id="IPR019769">
    <property type="entry name" value="Trans_elong_IF5A_hypusine_site"/>
</dbReference>
<dbReference type="InterPro" id="IPR022847">
    <property type="entry name" value="Transl_elong_IF5A_arc"/>
</dbReference>
<dbReference type="InterPro" id="IPR020189">
    <property type="entry name" value="Transl_elong_IF5A_C"/>
</dbReference>
<dbReference type="InterPro" id="IPR008991">
    <property type="entry name" value="Translation_prot_SH3-like_sf"/>
</dbReference>
<dbReference type="NCBIfam" id="TIGR00037">
    <property type="entry name" value="eIF_5A"/>
    <property type="match status" value="1"/>
</dbReference>
<dbReference type="NCBIfam" id="NF003076">
    <property type="entry name" value="PRK03999.1"/>
    <property type="match status" value="1"/>
</dbReference>
<dbReference type="PANTHER" id="PTHR11673">
    <property type="entry name" value="TRANSLATION INITIATION FACTOR 5A FAMILY MEMBER"/>
    <property type="match status" value="1"/>
</dbReference>
<dbReference type="Pfam" id="PF21485">
    <property type="entry name" value="IF5A-like_N"/>
    <property type="match status" value="1"/>
</dbReference>
<dbReference type="PIRSF" id="PIRSF003025">
    <property type="entry name" value="eIF5A"/>
    <property type="match status" value="1"/>
</dbReference>
<dbReference type="SMART" id="SM01376">
    <property type="entry name" value="eIF-5a"/>
    <property type="match status" value="1"/>
</dbReference>
<dbReference type="SUPFAM" id="SSF50249">
    <property type="entry name" value="Nucleic acid-binding proteins"/>
    <property type="match status" value="1"/>
</dbReference>
<dbReference type="SUPFAM" id="SSF50104">
    <property type="entry name" value="Translation proteins SH3-like domain"/>
    <property type="match status" value="1"/>
</dbReference>
<dbReference type="PROSITE" id="PS00302">
    <property type="entry name" value="IF5A_HYPUSINE"/>
    <property type="match status" value="1"/>
</dbReference>
<evidence type="ECO:0000250" key="1"/>
<evidence type="ECO:0000305" key="2"/>
<reference key="1">
    <citation type="journal article" date="2000" name="Proc. Natl. Acad. Sci. U.S.A.">
        <title>Genome sequence of Halobacterium species NRC-1.</title>
        <authorList>
            <person name="Ng W.V."/>
            <person name="Kennedy S.P."/>
            <person name="Mahairas G.G."/>
            <person name="Berquist B."/>
            <person name="Pan M."/>
            <person name="Shukla H.D."/>
            <person name="Lasky S.R."/>
            <person name="Baliga N.S."/>
            <person name="Thorsson V."/>
            <person name="Sbrogna J."/>
            <person name="Swartzell S."/>
            <person name="Weir D."/>
            <person name="Hall J."/>
            <person name="Dahl T.A."/>
            <person name="Welti R."/>
            <person name="Goo Y.A."/>
            <person name="Leithauser B."/>
            <person name="Keller K."/>
            <person name="Cruz R."/>
            <person name="Danson M.J."/>
            <person name="Hough D.W."/>
            <person name="Maddocks D.G."/>
            <person name="Jablonski P.E."/>
            <person name="Krebs M.P."/>
            <person name="Angevine C.M."/>
            <person name="Dale H."/>
            <person name="Isenbarger T.A."/>
            <person name="Peck R.F."/>
            <person name="Pohlschroder M."/>
            <person name="Spudich J.L."/>
            <person name="Jung K.-H."/>
            <person name="Alam M."/>
            <person name="Freitas T."/>
            <person name="Hou S."/>
            <person name="Daniels C.J."/>
            <person name="Dennis P.P."/>
            <person name="Omer A.D."/>
            <person name="Ebhardt H."/>
            <person name="Lowe T.M."/>
            <person name="Liang P."/>
            <person name="Riley M."/>
            <person name="Hood L."/>
            <person name="DasSarma S."/>
        </authorList>
    </citation>
    <scope>NUCLEOTIDE SEQUENCE [LARGE SCALE GENOMIC DNA]</scope>
    <source>
        <strain>ATCC 700922 / JCM 11081 / NRC-1</strain>
    </source>
</reference>
<keyword id="KW-0963">Cytoplasm</keyword>
<keyword id="KW-0385">Hypusine</keyword>
<keyword id="KW-0396">Initiation factor</keyword>
<keyword id="KW-0648">Protein biosynthesis</keyword>
<keyword id="KW-1185">Reference proteome</keyword>
<gene>
    <name type="primary">eif5a</name>
    <name type="ordered locus">VNG_1768G</name>
</gene>
<protein>
    <recommendedName>
        <fullName>Translation initiation factor 5A</fullName>
    </recommendedName>
    <alternativeName>
        <fullName>Hypusine-containing protein</fullName>
    </alternativeName>
    <alternativeName>
        <fullName>eIF-5A</fullName>
    </alternativeName>
</protein>
<sequence length="127" mass="14305">MAKEQKEVRDLQEGNYVMMEDAACQINAYSTAKPGKHGSAKARIEAEGVFDGKKRSLSQPVDAKIWVPIVNRKQGQIVSKESDTVAQVMDLETYETVTMQIPGELDIQADENIEYLEFEGQRKILQE</sequence>
<proteinExistence type="inferred from homology"/>
<name>IF5A_HALSA</name>
<comment type="function">
    <text evidence="1">Functions by promoting the formation of the first peptide bond.</text>
</comment>
<comment type="subcellular location">
    <subcellularLocation>
        <location evidence="1">Cytoplasm</location>
    </subcellularLocation>
</comment>
<comment type="similarity">
    <text evidence="2">Belongs to the eIF-5A family.</text>
</comment>